<gene>
    <name evidence="1" type="primary">hisZ</name>
    <name type="ordered locus">PMT_0698</name>
</gene>
<organism>
    <name type="scientific">Prochlorococcus marinus (strain MIT 9313)</name>
    <dbReference type="NCBI Taxonomy" id="74547"/>
    <lineage>
        <taxon>Bacteria</taxon>
        <taxon>Bacillati</taxon>
        <taxon>Cyanobacteriota</taxon>
        <taxon>Cyanophyceae</taxon>
        <taxon>Synechococcales</taxon>
        <taxon>Prochlorococcaceae</taxon>
        <taxon>Prochlorococcus</taxon>
    </lineage>
</organism>
<dbReference type="EMBL" id="BX548175">
    <property type="protein sequence ID" value="CAE20873.1"/>
    <property type="molecule type" value="Genomic_DNA"/>
</dbReference>
<dbReference type="RefSeq" id="WP_011130076.1">
    <property type="nucleotide sequence ID" value="NC_005071.1"/>
</dbReference>
<dbReference type="SMR" id="Q7TV03"/>
<dbReference type="KEGG" id="pmt:PMT_0698"/>
<dbReference type="eggNOG" id="COG3705">
    <property type="taxonomic scope" value="Bacteria"/>
</dbReference>
<dbReference type="HOGENOM" id="CLU_025113_0_2_3"/>
<dbReference type="OrthoDB" id="9800814at2"/>
<dbReference type="UniPathway" id="UPA00031">
    <property type="reaction ID" value="UER00006"/>
</dbReference>
<dbReference type="Proteomes" id="UP000001423">
    <property type="component" value="Chromosome"/>
</dbReference>
<dbReference type="GO" id="GO:0005737">
    <property type="term" value="C:cytoplasm"/>
    <property type="evidence" value="ECO:0007669"/>
    <property type="project" value="UniProtKB-SubCell"/>
</dbReference>
<dbReference type="GO" id="GO:0004821">
    <property type="term" value="F:histidine-tRNA ligase activity"/>
    <property type="evidence" value="ECO:0007669"/>
    <property type="project" value="TreeGrafter"/>
</dbReference>
<dbReference type="GO" id="GO:0006427">
    <property type="term" value="P:histidyl-tRNA aminoacylation"/>
    <property type="evidence" value="ECO:0007669"/>
    <property type="project" value="TreeGrafter"/>
</dbReference>
<dbReference type="GO" id="GO:0000105">
    <property type="term" value="P:L-histidine biosynthetic process"/>
    <property type="evidence" value="ECO:0007669"/>
    <property type="project" value="UniProtKB-UniRule"/>
</dbReference>
<dbReference type="Gene3D" id="3.30.930.10">
    <property type="entry name" value="Bira Bifunctional Protein, Domain 2"/>
    <property type="match status" value="1"/>
</dbReference>
<dbReference type="HAMAP" id="MF_00125">
    <property type="entry name" value="HisZ"/>
    <property type="match status" value="1"/>
</dbReference>
<dbReference type="InterPro" id="IPR006195">
    <property type="entry name" value="aa-tRNA-synth_II"/>
</dbReference>
<dbReference type="InterPro" id="IPR045864">
    <property type="entry name" value="aa-tRNA-synth_II/BPL/LPL"/>
</dbReference>
<dbReference type="InterPro" id="IPR041715">
    <property type="entry name" value="HisRS-like_core"/>
</dbReference>
<dbReference type="InterPro" id="IPR004516">
    <property type="entry name" value="HisRS/HisZ"/>
</dbReference>
<dbReference type="InterPro" id="IPR004517">
    <property type="entry name" value="HisZ"/>
</dbReference>
<dbReference type="NCBIfam" id="NF008939">
    <property type="entry name" value="PRK12292.2-1"/>
    <property type="match status" value="1"/>
</dbReference>
<dbReference type="PANTHER" id="PTHR43707:SF1">
    <property type="entry name" value="HISTIDINE--TRNA LIGASE, MITOCHONDRIAL-RELATED"/>
    <property type="match status" value="1"/>
</dbReference>
<dbReference type="PANTHER" id="PTHR43707">
    <property type="entry name" value="HISTIDYL-TRNA SYNTHETASE"/>
    <property type="match status" value="1"/>
</dbReference>
<dbReference type="Pfam" id="PF13393">
    <property type="entry name" value="tRNA-synt_His"/>
    <property type="match status" value="1"/>
</dbReference>
<dbReference type="PIRSF" id="PIRSF001549">
    <property type="entry name" value="His-tRNA_synth"/>
    <property type="match status" value="1"/>
</dbReference>
<dbReference type="SUPFAM" id="SSF55681">
    <property type="entry name" value="Class II aaRS and biotin synthetases"/>
    <property type="match status" value="1"/>
</dbReference>
<dbReference type="PROSITE" id="PS50862">
    <property type="entry name" value="AA_TRNA_LIGASE_II"/>
    <property type="match status" value="1"/>
</dbReference>
<comment type="function">
    <text evidence="1">Required for the first step of histidine biosynthesis. May allow the feedback regulation of ATP phosphoribosyltransferase activity by histidine.</text>
</comment>
<comment type="pathway">
    <text evidence="1">Amino-acid biosynthesis; L-histidine biosynthesis; L-histidine from 5-phospho-alpha-D-ribose 1-diphosphate: step 1/9.</text>
</comment>
<comment type="subunit">
    <text evidence="1">Heteromultimer composed of HisG and HisZ subunits.</text>
</comment>
<comment type="subcellular location">
    <subcellularLocation>
        <location evidence="1">Cytoplasm</location>
    </subcellularLocation>
</comment>
<comment type="miscellaneous">
    <text>This function is generally fulfilled by the C-terminal part of HisG, which is missing in some bacteria such as this one.</text>
</comment>
<comment type="similarity">
    <text evidence="1">Belongs to the class-II aminoacyl-tRNA synthetase family. HisZ subfamily.</text>
</comment>
<name>HISZ_PROMM</name>
<protein>
    <recommendedName>
        <fullName evidence="1">ATP phosphoribosyltransferase regulatory subunit</fullName>
    </recommendedName>
</protein>
<feature type="chain" id="PRO_0000171050" description="ATP phosphoribosyltransferase regulatory subunit">
    <location>
        <begin position="1"/>
        <end position="392"/>
    </location>
</feature>
<reference key="1">
    <citation type="journal article" date="2003" name="Nature">
        <title>Genome divergence in two Prochlorococcus ecotypes reflects oceanic niche differentiation.</title>
        <authorList>
            <person name="Rocap G."/>
            <person name="Larimer F.W."/>
            <person name="Lamerdin J.E."/>
            <person name="Malfatti S."/>
            <person name="Chain P."/>
            <person name="Ahlgren N.A."/>
            <person name="Arellano A."/>
            <person name="Coleman M."/>
            <person name="Hauser L."/>
            <person name="Hess W.R."/>
            <person name="Johnson Z.I."/>
            <person name="Land M.L."/>
            <person name="Lindell D."/>
            <person name="Post A.F."/>
            <person name="Regala W."/>
            <person name="Shah M."/>
            <person name="Shaw S.L."/>
            <person name="Steglich C."/>
            <person name="Sullivan M.B."/>
            <person name="Ting C.S."/>
            <person name="Tolonen A."/>
            <person name="Webb E.A."/>
            <person name="Zinser E.R."/>
            <person name="Chisholm S.W."/>
        </authorList>
    </citation>
    <scope>NUCLEOTIDE SEQUENCE [LARGE SCALE GENOMIC DNA]</scope>
    <source>
        <strain>MIT 9313</strain>
    </source>
</reference>
<sequence>MALQPAAGARDLNPQQVELNQKLSQRLAEVYRLWGYDEVSPPRVERLETLKAGGAIASQDIVRLVADEPLGLRPEMTASIARAACTRLKQRPRPLRLWAAGTIFESRTADEGSLCIEENLQSGVELFGVEPINAEMELLSLLFSAVETLELSKRHQPRLLVGHTALMDLIMLPFQNDLREKIRTALIHYDRLALESLQLPNDQFERLLHHLECRGEPLDVLERLSGLFGTQQALNNLQRLFEQMSPLAADQGIDLQLDPTFQPHFELYTGLVFQLVCQSDAAPVVIARGGRYDNLVARCGAKGLQAAGVGFSFAIDDIRELLTKEIKASDAVETTLVAYGEQATLEHALKRQRHWHKQGQRAVVELEACRDREDAFSRLSDRGCSTLDWLDH</sequence>
<accession>Q7TV03</accession>
<proteinExistence type="inferred from homology"/>
<keyword id="KW-0028">Amino-acid biosynthesis</keyword>
<keyword id="KW-0963">Cytoplasm</keyword>
<keyword id="KW-0368">Histidine biosynthesis</keyword>
<keyword id="KW-1185">Reference proteome</keyword>
<evidence type="ECO:0000255" key="1">
    <source>
        <dbReference type="HAMAP-Rule" id="MF_00125"/>
    </source>
</evidence>